<name>RL21_STRA3</name>
<reference key="1">
    <citation type="journal article" date="2002" name="Mol. Microbiol.">
        <title>Genome sequence of Streptococcus agalactiae, a pathogen causing invasive neonatal disease.</title>
        <authorList>
            <person name="Glaser P."/>
            <person name="Rusniok C."/>
            <person name="Buchrieser C."/>
            <person name="Chevalier F."/>
            <person name="Frangeul L."/>
            <person name="Msadek T."/>
            <person name="Zouine M."/>
            <person name="Couve E."/>
            <person name="Lalioui L."/>
            <person name="Poyart C."/>
            <person name="Trieu-Cuot P."/>
            <person name="Kunst F."/>
        </authorList>
    </citation>
    <scope>NUCLEOTIDE SEQUENCE [LARGE SCALE GENOMIC DNA]</scope>
    <source>
        <strain>NEM316</strain>
    </source>
</reference>
<sequence length="104" mass="11201">MSTYAIIKTGGKQVKVEVGQAIYVEKLDVEAGAEVTFNEVVLVGGETTKVGTPVVEGATVVGTVEKQGKQKKVVSYKYKPKKGSHRKQGHRQPYTKVVINAINA</sequence>
<dbReference type="EMBL" id="AL766850">
    <property type="protein sequence ID" value="CAD47099.1"/>
    <property type="molecule type" value="Genomic_DNA"/>
</dbReference>
<dbReference type="RefSeq" id="WP_000109135.1">
    <property type="nucleotide sequence ID" value="NC_004368.1"/>
</dbReference>
<dbReference type="SMR" id="Q8E4G1"/>
<dbReference type="GeneID" id="66886236"/>
<dbReference type="KEGG" id="san:rpl21"/>
<dbReference type="eggNOG" id="COG0261">
    <property type="taxonomic scope" value="Bacteria"/>
</dbReference>
<dbReference type="HOGENOM" id="CLU_061463_3_1_9"/>
<dbReference type="Proteomes" id="UP000000823">
    <property type="component" value="Chromosome"/>
</dbReference>
<dbReference type="GO" id="GO:0005737">
    <property type="term" value="C:cytoplasm"/>
    <property type="evidence" value="ECO:0007669"/>
    <property type="project" value="UniProtKB-ARBA"/>
</dbReference>
<dbReference type="GO" id="GO:1990904">
    <property type="term" value="C:ribonucleoprotein complex"/>
    <property type="evidence" value="ECO:0007669"/>
    <property type="project" value="UniProtKB-KW"/>
</dbReference>
<dbReference type="GO" id="GO:0005840">
    <property type="term" value="C:ribosome"/>
    <property type="evidence" value="ECO:0007669"/>
    <property type="project" value="UniProtKB-KW"/>
</dbReference>
<dbReference type="GO" id="GO:0019843">
    <property type="term" value="F:rRNA binding"/>
    <property type="evidence" value="ECO:0007669"/>
    <property type="project" value="UniProtKB-UniRule"/>
</dbReference>
<dbReference type="GO" id="GO:0003735">
    <property type="term" value="F:structural constituent of ribosome"/>
    <property type="evidence" value="ECO:0007669"/>
    <property type="project" value="InterPro"/>
</dbReference>
<dbReference type="GO" id="GO:0006412">
    <property type="term" value="P:translation"/>
    <property type="evidence" value="ECO:0007669"/>
    <property type="project" value="UniProtKB-UniRule"/>
</dbReference>
<dbReference type="HAMAP" id="MF_01363">
    <property type="entry name" value="Ribosomal_bL21"/>
    <property type="match status" value="1"/>
</dbReference>
<dbReference type="InterPro" id="IPR028909">
    <property type="entry name" value="bL21-like"/>
</dbReference>
<dbReference type="InterPro" id="IPR036164">
    <property type="entry name" value="bL21-like_sf"/>
</dbReference>
<dbReference type="InterPro" id="IPR001787">
    <property type="entry name" value="Ribosomal_bL21"/>
</dbReference>
<dbReference type="InterPro" id="IPR018258">
    <property type="entry name" value="Ribosomal_bL21_CS"/>
</dbReference>
<dbReference type="NCBIfam" id="TIGR00061">
    <property type="entry name" value="L21"/>
    <property type="match status" value="1"/>
</dbReference>
<dbReference type="PANTHER" id="PTHR21349">
    <property type="entry name" value="50S RIBOSOMAL PROTEIN L21"/>
    <property type="match status" value="1"/>
</dbReference>
<dbReference type="PANTHER" id="PTHR21349:SF0">
    <property type="entry name" value="LARGE RIBOSOMAL SUBUNIT PROTEIN BL21M"/>
    <property type="match status" value="1"/>
</dbReference>
<dbReference type="Pfam" id="PF00829">
    <property type="entry name" value="Ribosomal_L21p"/>
    <property type="match status" value="1"/>
</dbReference>
<dbReference type="SUPFAM" id="SSF141091">
    <property type="entry name" value="L21p-like"/>
    <property type="match status" value="1"/>
</dbReference>
<dbReference type="PROSITE" id="PS01169">
    <property type="entry name" value="RIBOSOMAL_L21"/>
    <property type="match status" value="1"/>
</dbReference>
<evidence type="ECO:0000255" key="1">
    <source>
        <dbReference type="HAMAP-Rule" id="MF_01363"/>
    </source>
</evidence>
<evidence type="ECO:0000305" key="2"/>
<proteinExistence type="inferred from homology"/>
<gene>
    <name evidence="1" type="primary">rplU</name>
    <name type="ordered locus">gbs1440</name>
</gene>
<organism>
    <name type="scientific">Streptococcus agalactiae serotype III (strain NEM316)</name>
    <dbReference type="NCBI Taxonomy" id="211110"/>
    <lineage>
        <taxon>Bacteria</taxon>
        <taxon>Bacillati</taxon>
        <taxon>Bacillota</taxon>
        <taxon>Bacilli</taxon>
        <taxon>Lactobacillales</taxon>
        <taxon>Streptococcaceae</taxon>
        <taxon>Streptococcus</taxon>
    </lineage>
</organism>
<protein>
    <recommendedName>
        <fullName evidence="1">Large ribosomal subunit protein bL21</fullName>
    </recommendedName>
    <alternativeName>
        <fullName evidence="2">50S ribosomal protein L21</fullName>
    </alternativeName>
</protein>
<comment type="function">
    <text evidence="1">This protein binds to 23S rRNA in the presence of protein L20.</text>
</comment>
<comment type="subunit">
    <text evidence="1">Part of the 50S ribosomal subunit. Contacts protein L20.</text>
</comment>
<comment type="similarity">
    <text evidence="1">Belongs to the bacterial ribosomal protein bL21 family.</text>
</comment>
<feature type="chain" id="PRO_0000269388" description="Large ribosomal subunit protein bL21">
    <location>
        <begin position="1"/>
        <end position="104"/>
    </location>
</feature>
<accession>Q8E4G1</accession>
<keyword id="KW-0687">Ribonucleoprotein</keyword>
<keyword id="KW-0689">Ribosomal protein</keyword>
<keyword id="KW-0694">RNA-binding</keyword>
<keyword id="KW-0699">rRNA-binding</keyword>